<reference key="1">
    <citation type="journal article" date="1998" name="Biochem. Biophys. Res. Commun.">
        <title>Cloning, structural organization, and transcriptional activity of the rat vitamin K-dependent gamma-glutamyl carboxylase gene.</title>
        <authorList>
            <person name="Romero E.E."/>
            <person name="Deo R."/>
            <person name="Velazquez-Estades L.J."/>
            <person name="Roth D.A."/>
        </authorList>
    </citation>
    <scope>NUCLEOTIDE SEQUENCE [MRNA]</scope>
    <source>
        <strain>Sprague-Dawley</strain>
        <tissue>Liver</tissue>
    </source>
</reference>
<reference key="2">
    <citation type="journal article" date="1998" name="Exp. Cell Res.">
        <title>Cloning of rat vitamin K-dependent gamma-glutamyl carboxylase and developmentally regulated gene expression in post-implantation embryos.</title>
        <authorList>
            <person name="Romero E.E."/>
            <person name="Velazquez-Estades L.J."/>
            <person name="Deo R."/>
            <person name="Schapiro B."/>
            <person name="Roth D.A."/>
        </authorList>
    </citation>
    <scope>NUCLEOTIDE SEQUENCE [MRNA]</scope>
    <source>
        <strain>Sprague-Dawley</strain>
        <tissue>Liver</tissue>
    </source>
</reference>
<reference key="3">
    <citation type="journal article" date="2004" name="J. Biol. Chem.">
        <title>The inhibitory effect of calumenin on the vitamin K-dependent gamma-carboxylation system. Characterization of the system in normal and warfarin-resistant rats.</title>
        <authorList>
            <person name="Wajih N."/>
            <person name="Sane D.C."/>
            <person name="Hutson S.M."/>
            <person name="Wallin R."/>
        </authorList>
    </citation>
    <scope>INTERACTION WITH CALU</scope>
</reference>
<name>VKGC_RAT</name>
<accession>O88496</accession>
<protein>
    <recommendedName>
        <fullName>Vitamin K-dependent gamma-carboxylase</fullName>
        <ecNumber evidence="2">4.1.1.90</ecNumber>
    </recommendedName>
    <alternativeName>
        <fullName>Gamma-glutamyl carboxylase</fullName>
    </alternativeName>
    <alternativeName>
        <fullName>Peptidyl-glutamate 4-carboxylase</fullName>
    </alternativeName>
    <alternativeName>
        <fullName>Vitamin K gamma glutamyl carboxylase</fullName>
    </alternativeName>
</protein>
<evidence type="ECO:0000250" key="1"/>
<evidence type="ECO:0000250" key="2">
    <source>
        <dbReference type="UniProtKB" id="P38435"/>
    </source>
</evidence>
<evidence type="ECO:0000255" key="3"/>
<evidence type="ECO:0000256" key="4">
    <source>
        <dbReference type="SAM" id="MobiDB-lite"/>
    </source>
</evidence>
<evidence type="ECO:0000269" key="5">
    <source>
    </source>
</evidence>
<evidence type="ECO:0000305" key="6"/>
<keyword id="KW-0007">Acetylation</keyword>
<keyword id="KW-1015">Disulfide bond</keyword>
<keyword id="KW-0256">Endoplasmic reticulum</keyword>
<keyword id="KW-0456">Lyase</keyword>
<keyword id="KW-0472">Membrane</keyword>
<keyword id="KW-1185">Reference proteome</keyword>
<keyword id="KW-0812">Transmembrane</keyword>
<keyword id="KW-1133">Transmembrane helix</keyword>
<gene>
    <name type="primary">Ggcx</name>
</gene>
<sequence>MAVHRGSARAAPASDKVQKNKPAQTSGLEQGSRMARIFGFEWADLSSWQSVVTLLNRPTDPANLAVFRFLFAFLMLLDIPQERGLSSLDRKYLDGLDVCRFPLLDALRPLPLDWMYLVYTIMFLGALGMMLGLWYRLSCMLFLLPYWYVFLLDKTSWNNHSYLYGLLAFQLTFMDANHYWSVDGLLSAQKKNAHVPLWNYTVLRGQIFIVYFIAGVKKLDADWVEGYSMEHLSRHWLFSPFKLVLSEELTSLLVVHWCGLLLDLSAGFLLFFDASRPIGLVFVSYFHCMNSQLFSIGMFPYVMLASSPLFCSAEWPRKLVARCPKRLQELLPAKAAPRPSASCVYKRARAKAGQKPGLRHHLGTVFTLLYLLEQLFLPYSHFLTQGYNNWTNGLYGYSWDMMVHSRSHQHVKITYRDGLTGELGYLNPGVFTQSRRWKDHADMLKQYATCLSLLLPKYNVTEPQIYFDIWVSINDRFQQRLFDPRVDIVQAVWSPFRRTPWVQPLLMDLSPWRTKLQDIKSSLDNHTEVVFIADFPGLHLENFVSEDLGNTSIQLLQGEVTVELVAEQKNQTLREGEKMQLPAGEYHKVYTVSSSPSCYMYIYVNTTEVALEQDLAYLQELKEKVENGSETGPLPPELQPLLEGEVKGGPEPTPLVQTFLRRQRKLQEIERRRNSPLHERFLRFVLRKLYVFRRSFLMTRISLRNLLFGRPSLEQLAQEVTYANLRPFEPVDESSASNTDSSDPHPSEPDSEHVHSEL</sequence>
<proteinExistence type="evidence at protein level"/>
<dbReference type="EC" id="4.1.1.90" evidence="2"/>
<dbReference type="EMBL" id="AF065387">
    <property type="protein sequence ID" value="AAC82374.1"/>
    <property type="molecule type" value="mRNA"/>
</dbReference>
<dbReference type="RefSeq" id="NP_113944.1">
    <property type="nucleotide sequence ID" value="NM_031756.1"/>
</dbReference>
<dbReference type="SMR" id="O88496"/>
<dbReference type="FunCoup" id="O88496">
    <property type="interactions" value="595"/>
</dbReference>
<dbReference type="STRING" id="10116.ENSRNOP00000017928"/>
<dbReference type="ChEMBL" id="CHEMBL2744"/>
<dbReference type="GlyGen" id="O88496">
    <property type="glycosylation" value="1 site"/>
</dbReference>
<dbReference type="PhosphoSitePlus" id="O88496"/>
<dbReference type="jPOST" id="O88496"/>
<dbReference type="PaxDb" id="10116-ENSRNOP00000017928"/>
<dbReference type="GeneID" id="81716"/>
<dbReference type="KEGG" id="rno:81716"/>
<dbReference type="UCSC" id="RGD:68383">
    <property type="organism name" value="rat"/>
</dbReference>
<dbReference type="AGR" id="RGD:68383"/>
<dbReference type="CTD" id="2677"/>
<dbReference type="RGD" id="68383">
    <property type="gene designation" value="Ggcx"/>
</dbReference>
<dbReference type="eggNOG" id="ENOG502QRU2">
    <property type="taxonomic scope" value="Eukaryota"/>
</dbReference>
<dbReference type="InParanoid" id="O88496"/>
<dbReference type="OrthoDB" id="54068at9989"/>
<dbReference type="PhylomeDB" id="O88496"/>
<dbReference type="BRENDA" id="4.1.1.90">
    <property type="organism ID" value="5301"/>
</dbReference>
<dbReference type="Reactome" id="R-RNO-159740">
    <property type="pathway name" value="Gamma-carboxylation of protein precursors"/>
</dbReference>
<dbReference type="PRO" id="PR:O88496"/>
<dbReference type="Proteomes" id="UP000002494">
    <property type="component" value="Unplaced"/>
</dbReference>
<dbReference type="GO" id="GO:0005788">
    <property type="term" value="C:endoplasmic reticulum lumen"/>
    <property type="evidence" value="ECO:0000266"/>
    <property type="project" value="RGD"/>
</dbReference>
<dbReference type="GO" id="GO:0005789">
    <property type="term" value="C:endoplasmic reticulum membrane"/>
    <property type="evidence" value="ECO:0000266"/>
    <property type="project" value="RGD"/>
</dbReference>
<dbReference type="GO" id="GO:0008488">
    <property type="term" value="F:gamma-glutamyl carboxylase activity"/>
    <property type="evidence" value="ECO:0000314"/>
    <property type="project" value="RGD"/>
</dbReference>
<dbReference type="GO" id="GO:0042277">
    <property type="term" value="F:peptide binding"/>
    <property type="evidence" value="ECO:0000305"/>
    <property type="project" value="RGD"/>
</dbReference>
<dbReference type="GO" id="GO:0019842">
    <property type="term" value="F:vitamin binding"/>
    <property type="evidence" value="ECO:0000314"/>
    <property type="project" value="RGD"/>
</dbReference>
<dbReference type="GO" id="GO:0060437">
    <property type="term" value="P:lung growth"/>
    <property type="evidence" value="ECO:0000270"/>
    <property type="project" value="RGD"/>
</dbReference>
<dbReference type="GO" id="GO:0051604">
    <property type="term" value="P:protein maturation"/>
    <property type="evidence" value="ECO:0000266"/>
    <property type="project" value="RGD"/>
</dbReference>
<dbReference type="GO" id="GO:0071548">
    <property type="term" value="P:response to dexamethasone"/>
    <property type="evidence" value="ECO:0000270"/>
    <property type="project" value="RGD"/>
</dbReference>
<dbReference type="GO" id="GO:0010042">
    <property type="term" value="P:response to manganese ion"/>
    <property type="evidence" value="ECO:0000270"/>
    <property type="project" value="RGD"/>
</dbReference>
<dbReference type="GO" id="GO:0070482">
    <property type="term" value="P:response to oxygen levels"/>
    <property type="evidence" value="ECO:0000270"/>
    <property type="project" value="RGD"/>
</dbReference>
<dbReference type="GO" id="GO:0071107">
    <property type="term" value="P:response to parathyroid hormone"/>
    <property type="evidence" value="ECO:0000270"/>
    <property type="project" value="RGD"/>
</dbReference>
<dbReference type="GO" id="GO:1904016">
    <property type="term" value="P:response to Thyroglobulin triiodothyronine"/>
    <property type="evidence" value="ECO:0000270"/>
    <property type="project" value="RGD"/>
</dbReference>
<dbReference type="GO" id="GO:0033280">
    <property type="term" value="P:response to vitamin D"/>
    <property type="evidence" value="ECO:0000270"/>
    <property type="project" value="RGD"/>
</dbReference>
<dbReference type="GO" id="GO:0032571">
    <property type="term" value="P:response to vitamin K"/>
    <property type="evidence" value="ECO:0000270"/>
    <property type="project" value="RGD"/>
</dbReference>
<dbReference type="GO" id="GO:0042373">
    <property type="term" value="P:vitamin K metabolic process"/>
    <property type="evidence" value="ECO:0000266"/>
    <property type="project" value="RGD"/>
</dbReference>
<dbReference type="InterPro" id="IPR011020">
    <property type="entry name" value="HTTM-like"/>
</dbReference>
<dbReference type="InterPro" id="IPR053934">
    <property type="entry name" value="HTTM_dom"/>
</dbReference>
<dbReference type="InterPro" id="IPR011051">
    <property type="entry name" value="RmlC_Cupin_sf"/>
</dbReference>
<dbReference type="InterPro" id="IPR007782">
    <property type="entry name" value="VKG_COase"/>
</dbReference>
<dbReference type="InterPro" id="IPR053935">
    <property type="entry name" value="VKGC_lumenal_dom"/>
</dbReference>
<dbReference type="PANTHER" id="PTHR12639">
    <property type="entry name" value="VITAMIN K-DEPENDENT GAMMA-CARBOXYLASE"/>
    <property type="match status" value="1"/>
</dbReference>
<dbReference type="PANTHER" id="PTHR12639:SF6">
    <property type="entry name" value="VITAMIN K-DEPENDENT GAMMA-CARBOXYLASE"/>
    <property type="match status" value="1"/>
</dbReference>
<dbReference type="Pfam" id="PF05090">
    <property type="entry name" value="HTTM"/>
    <property type="match status" value="1"/>
</dbReference>
<dbReference type="Pfam" id="PF22777">
    <property type="entry name" value="VKGC_lumenal_dom"/>
    <property type="match status" value="1"/>
</dbReference>
<dbReference type="SMART" id="SM00752">
    <property type="entry name" value="HTTM"/>
    <property type="match status" value="1"/>
</dbReference>
<dbReference type="SUPFAM" id="SSF51182">
    <property type="entry name" value="RmlC-like cupins"/>
    <property type="match status" value="1"/>
</dbReference>
<comment type="function">
    <text evidence="2">Mediates the vitamin K-dependent carboxylation of glutamate residues to calcium-binding gamma-carboxyglutamate (Gla) residues with the concomitant conversion of the reduced hydroquinone form of vitamin K to vitamin K epoxide. Catalyzes gamma-carboxylation of various proteins, such as blood coagulation factors (F2, F7, F9 and F10), osteocalcin (BGLAP) or matrix Gla protein (MGP).</text>
</comment>
<comment type="catalytic activity">
    <reaction evidence="2">
        <text>4-carboxy-L-glutamyl-[protein] + 2,3-epoxyphylloquinone + H2O + H(+) = phylloquinol + L-glutamyl-[protein] + CO2 + O2</text>
        <dbReference type="Rhea" id="RHEA:45140"/>
        <dbReference type="Rhea" id="RHEA-COMP:10208"/>
        <dbReference type="Rhea" id="RHEA-COMP:11094"/>
        <dbReference type="ChEBI" id="CHEBI:15377"/>
        <dbReference type="ChEBI" id="CHEBI:15378"/>
        <dbReference type="ChEBI" id="CHEBI:15379"/>
        <dbReference type="ChEBI" id="CHEBI:15759"/>
        <dbReference type="ChEBI" id="CHEBI:16526"/>
        <dbReference type="ChEBI" id="CHEBI:28433"/>
        <dbReference type="ChEBI" id="CHEBI:29973"/>
        <dbReference type="ChEBI" id="CHEBI:84990"/>
        <dbReference type="EC" id="4.1.1.90"/>
    </reaction>
    <physiologicalReaction direction="right-to-left" evidence="2">
        <dbReference type="Rhea" id="RHEA:45142"/>
    </physiologicalReaction>
</comment>
<comment type="subunit">
    <text evidence="2 5">Monomer (By similarity). Interacts with CALU.</text>
</comment>
<comment type="subcellular location">
    <subcellularLocation>
        <location evidence="2">Endoplasmic reticulum membrane</location>
        <topology evidence="2">Multi-pass membrane protein</topology>
    </subcellularLocation>
</comment>
<comment type="miscellaneous">
    <text>The vitamin K-dependent protein substrates of carboxylase have usually a propeptide that binds to a high-affinity site on the carboxylase. CO(2), O(2) and reduced vitamin K are cosubstrates.</text>
</comment>
<comment type="similarity">
    <text evidence="6">Belongs to the vitamin K-dependent gamma-carboxylase family.</text>
</comment>
<organism>
    <name type="scientific">Rattus norvegicus</name>
    <name type="common">Rat</name>
    <dbReference type="NCBI Taxonomy" id="10116"/>
    <lineage>
        <taxon>Eukaryota</taxon>
        <taxon>Metazoa</taxon>
        <taxon>Chordata</taxon>
        <taxon>Craniata</taxon>
        <taxon>Vertebrata</taxon>
        <taxon>Euteleostomi</taxon>
        <taxon>Mammalia</taxon>
        <taxon>Eutheria</taxon>
        <taxon>Euarchontoglires</taxon>
        <taxon>Glires</taxon>
        <taxon>Rodentia</taxon>
        <taxon>Myomorpha</taxon>
        <taxon>Muroidea</taxon>
        <taxon>Muridae</taxon>
        <taxon>Murinae</taxon>
        <taxon>Rattus</taxon>
    </lineage>
</organism>
<feature type="initiator methionine" description="Removed" evidence="2">
    <location>
        <position position="1"/>
    </location>
</feature>
<feature type="chain" id="PRO_0000191826" description="Vitamin K-dependent gamma-carboxylase">
    <location>
        <begin position="2"/>
        <end position="758"/>
    </location>
</feature>
<feature type="topological domain" description="Cytoplasmic" evidence="3">
    <location>
        <begin position="2"/>
        <end position="60"/>
    </location>
</feature>
<feature type="transmembrane region" description="Helical" evidence="3">
    <location>
        <begin position="61"/>
        <end position="81"/>
    </location>
</feature>
<feature type="topological domain" description="Lumenal" evidence="3">
    <location>
        <begin position="82"/>
        <end position="113"/>
    </location>
</feature>
<feature type="transmembrane region" description="Helical" evidence="3">
    <location>
        <begin position="114"/>
        <end position="134"/>
    </location>
</feature>
<feature type="topological domain" description="Cytoplasmic" evidence="3">
    <location>
        <begin position="135"/>
        <end position="136"/>
    </location>
</feature>
<feature type="transmembrane region" description="Helical" evidence="3">
    <location>
        <begin position="137"/>
        <end position="157"/>
    </location>
</feature>
<feature type="topological domain" description="Lumenal" evidence="3">
    <location>
        <begin position="158"/>
        <end position="292"/>
    </location>
</feature>
<feature type="transmembrane region" description="Helical" evidence="3">
    <location>
        <begin position="293"/>
        <end position="313"/>
    </location>
</feature>
<feature type="topological domain" description="Cytoplasmic" evidence="3">
    <location>
        <begin position="314"/>
        <end position="361"/>
    </location>
</feature>
<feature type="transmembrane region" description="Helical" evidence="3">
    <location>
        <begin position="362"/>
        <end position="382"/>
    </location>
</feature>
<feature type="topological domain" description="Lumenal" evidence="3">
    <location>
        <begin position="383"/>
        <end position="758"/>
    </location>
</feature>
<feature type="region of interest" description="Disordered" evidence="4">
    <location>
        <begin position="1"/>
        <end position="29"/>
    </location>
</feature>
<feature type="region of interest" description="Disordered" evidence="4">
    <location>
        <begin position="727"/>
        <end position="758"/>
    </location>
</feature>
<feature type="compositionally biased region" description="Basic and acidic residues" evidence="4">
    <location>
        <begin position="742"/>
        <end position="758"/>
    </location>
</feature>
<feature type="modified residue" description="N-acetylalanine" evidence="2">
    <location>
        <position position="2"/>
    </location>
</feature>
<feature type="disulfide bond" evidence="1">
    <location>
        <begin position="99"/>
        <end position="450"/>
    </location>
</feature>